<feature type="initiator methionine" description="Removed" evidence="1">
    <location>
        <position position="1"/>
    </location>
</feature>
<feature type="chain" id="PRO_0000045941" description="Thymosin beta-10">
    <location>
        <begin position="2"/>
        <end position="44"/>
    </location>
</feature>
<evidence type="ECO:0000250" key="1"/>
<evidence type="ECO:0000305" key="2"/>
<comment type="function">
    <text evidence="1">Plays an important role in the organization of the cytoskeleton. Binds to and sequesters actin monomers (G actin) and therefore inhibits actin polymerization (By similarity).</text>
</comment>
<comment type="subcellular location">
    <subcellularLocation>
        <location evidence="1">Cytoplasm</location>
        <location evidence="1">Cytoskeleton</location>
    </subcellularLocation>
</comment>
<comment type="similarity">
    <text evidence="2">Belongs to the thymosin beta family.</text>
</comment>
<protein>
    <recommendedName>
        <fullName>Thymosin beta-10</fullName>
        <shortName>Thymb10</shortName>
    </recommendedName>
</protein>
<reference key="1">
    <citation type="submission" date="2000-03" db="EMBL/GenBank/DDBJ databases">
        <title>Torpedo electric lobe cDNAs that suppress a choline metabolism mutation in yeast.</title>
        <authorList>
            <person name="O'Regan S."/>
            <person name="Matz V."/>
            <person name="Cha N."/>
            <person name="Meunier F.-M."/>
        </authorList>
    </citation>
    <scope>NUCLEOTIDE SEQUENCE [MRNA]</scope>
    <source>
        <tissue>Electric lobe</tissue>
    </source>
</reference>
<sequence length="44" mass="4916">MADKPDFGEVASFDKSKLKKTDTEVKNTLPTKETIDQEKKAESS</sequence>
<dbReference type="EMBL" id="AJ276369">
    <property type="protein sequence ID" value="CAB76965.1"/>
    <property type="molecule type" value="mRNA"/>
</dbReference>
<dbReference type="SMR" id="Q9I980"/>
<dbReference type="GO" id="GO:0005737">
    <property type="term" value="C:cytoplasm"/>
    <property type="evidence" value="ECO:0007669"/>
    <property type="project" value="UniProtKB-KW"/>
</dbReference>
<dbReference type="GO" id="GO:0005856">
    <property type="term" value="C:cytoskeleton"/>
    <property type="evidence" value="ECO:0007669"/>
    <property type="project" value="UniProtKB-SubCell"/>
</dbReference>
<dbReference type="GO" id="GO:0003785">
    <property type="term" value="F:actin monomer binding"/>
    <property type="evidence" value="ECO:0007669"/>
    <property type="project" value="InterPro"/>
</dbReference>
<dbReference type="GO" id="GO:0007015">
    <property type="term" value="P:actin filament organization"/>
    <property type="evidence" value="ECO:0007669"/>
    <property type="project" value="InterPro"/>
</dbReference>
<dbReference type="GO" id="GO:0030334">
    <property type="term" value="P:regulation of cell migration"/>
    <property type="evidence" value="ECO:0007669"/>
    <property type="project" value="TreeGrafter"/>
</dbReference>
<dbReference type="FunFam" id="1.20.5.520:FF:000001">
    <property type="entry name" value="Thymosin beta"/>
    <property type="match status" value="1"/>
</dbReference>
<dbReference type="Gene3D" id="1.20.5.520">
    <property type="entry name" value="Single helix bin"/>
    <property type="match status" value="1"/>
</dbReference>
<dbReference type="InterPro" id="IPR001152">
    <property type="entry name" value="Beta-thymosin"/>
</dbReference>
<dbReference type="InterPro" id="IPR038386">
    <property type="entry name" value="Beta-thymosin_sf"/>
</dbReference>
<dbReference type="PANTHER" id="PTHR12021">
    <property type="entry name" value="THYMOSIN BETA"/>
    <property type="match status" value="1"/>
</dbReference>
<dbReference type="PANTHER" id="PTHR12021:SF10">
    <property type="entry name" value="THYMOSIN BETA-10"/>
    <property type="match status" value="1"/>
</dbReference>
<dbReference type="Pfam" id="PF01290">
    <property type="entry name" value="Thymosin"/>
    <property type="match status" value="1"/>
</dbReference>
<dbReference type="PIRSF" id="PIRSF001828">
    <property type="entry name" value="Thymosin_beta"/>
    <property type="match status" value="1"/>
</dbReference>
<dbReference type="SMART" id="SM00152">
    <property type="entry name" value="THY"/>
    <property type="match status" value="1"/>
</dbReference>
<dbReference type="PROSITE" id="PS00500">
    <property type="entry name" value="THYMOSIN_B4"/>
    <property type="match status" value="1"/>
</dbReference>
<organism>
    <name type="scientific">Torpedo marmorata</name>
    <name type="common">Marbled electric ray</name>
    <dbReference type="NCBI Taxonomy" id="7788"/>
    <lineage>
        <taxon>Eukaryota</taxon>
        <taxon>Metazoa</taxon>
        <taxon>Chordata</taxon>
        <taxon>Craniata</taxon>
        <taxon>Vertebrata</taxon>
        <taxon>Chondrichthyes</taxon>
        <taxon>Elasmobranchii</taxon>
        <taxon>Batoidea</taxon>
        <taxon>Torpediniformes</taxon>
        <taxon>Torpedinidae</taxon>
        <taxon>Torpedo</taxon>
    </lineage>
</organism>
<keyword id="KW-0009">Actin-binding</keyword>
<keyword id="KW-0963">Cytoplasm</keyword>
<keyword id="KW-0206">Cytoskeleton</keyword>
<name>TYB10_TORMA</name>
<accession>Q9I980</accession>
<proteinExistence type="inferred from homology"/>